<sequence length="134" mass="15211">MWSDPVADMLTRIRNANSVFKESVEIPASNLKKDILEIMKKEGFINDYKFIDDGKQGILKVYLKYKGTRRDKKPIMEGIIRVSKSGRRVYVNTRNIPKVKGGLGIAILSTSQGVMTDKEAREKKVGGEVICYVW</sequence>
<dbReference type="EMBL" id="CP000879">
    <property type="protein sequence ID" value="ABX31500.1"/>
    <property type="molecule type" value="Genomic_DNA"/>
</dbReference>
<dbReference type="RefSeq" id="WP_012208603.1">
    <property type="nucleotide sequence ID" value="NC_010003.1"/>
</dbReference>
<dbReference type="SMR" id="A9BG04"/>
<dbReference type="STRING" id="403833.Pmob_0776"/>
<dbReference type="KEGG" id="pmo:Pmob_0776"/>
<dbReference type="eggNOG" id="COG0096">
    <property type="taxonomic scope" value="Bacteria"/>
</dbReference>
<dbReference type="HOGENOM" id="CLU_098428_0_2_0"/>
<dbReference type="OrthoDB" id="9802617at2"/>
<dbReference type="Proteomes" id="UP000000789">
    <property type="component" value="Chromosome"/>
</dbReference>
<dbReference type="GO" id="GO:1990904">
    <property type="term" value="C:ribonucleoprotein complex"/>
    <property type="evidence" value="ECO:0007669"/>
    <property type="project" value="UniProtKB-KW"/>
</dbReference>
<dbReference type="GO" id="GO:0005840">
    <property type="term" value="C:ribosome"/>
    <property type="evidence" value="ECO:0007669"/>
    <property type="project" value="UniProtKB-KW"/>
</dbReference>
<dbReference type="GO" id="GO:0019843">
    <property type="term" value="F:rRNA binding"/>
    <property type="evidence" value="ECO:0007669"/>
    <property type="project" value="UniProtKB-UniRule"/>
</dbReference>
<dbReference type="GO" id="GO:0003735">
    <property type="term" value="F:structural constituent of ribosome"/>
    <property type="evidence" value="ECO:0007669"/>
    <property type="project" value="InterPro"/>
</dbReference>
<dbReference type="GO" id="GO:0006412">
    <property type="term" value="P:translation"/>
    <property type="evidence" value="ECO:0007669"/>
    <property type="project" value="UniProtKB-UniRule"/>
</dbReference>
<dbReference type="FunFam" id="3.30.1370.30:FF:000002">
    <property type="entry name" value="30S ribosomal protein S8"/>
    <property type="match status" value="1"/>
</dbReference>
<dbReference type="FunFam" id="3.30.1490.10:FF:000001">
    <property type="entry name" value="30S ribosomal protein S8"/>
    <property type="match status" value="1"/>
</dbReference>
<dbReference type="Gene3D" id="3.30.1370.30">
    <property type="match status" value="1"/>
</dbReference>
<dbReference type="Gene3D" id="3.30.1490.10">
    <property type="match status" value="1"/>
</dbReference>
<dbReference type="HAMAP" id="MF_01302_B">
    <property type="entry name" value="Ribosomal_uS8_B"/>
    <property type="match status" value="1"/>
</dbReference>
<dbReference type="InterPro" id="IPR000630">
    <property type="entry name" value="Ribosomal_uS8"/>
</dbReference>
<dbReference type="InterPro" id="IPR047863">
    <property type="entry name" value="Ribosomal_uS8_CS"/>
</dbReference>
<dbReference type="InterPro" id="IPR035987">
    <property type="entry name" value="Ribosomal_uS8_sf"/>
</dbReference>
<dbReference type="NCBIfam" id="NF001109">
    <property type="entry name" value="PRK00136.1"/>
    <property type="match status" value="1"/>
</dbReference>
<dbReference type="PANTHER" id="PTHR11758">
    <property type="entry name" value="40S RIBOSOMAL PROTEIN S15A"/>
    <property type="match status" value="1"/>
</dbReference>
<dbReference type="Pfam" id="PF00410">
    <property type="entry name" value="Ribosomal_S8"/>
    <property type="match status" value="1"/>
</dbReference>
<dbReference type="SUPFAM" id="SSF56047">
    <property type="entry name" value="Ribosomal protein S8"/>
    <property type="match status" value="1"/>
</dbReference>
<dbReference type="PROSITE" id="PS00053">
    <property type="entry name" value="RIBOSOMAL_S8"/>
    <property type="match status" value="1"/>
</dbReference>
<gene>
    <name evidence="1" type="primary">rpsH</name>
    <name type="ordered locus">Pmob_0776</name>
</gene>
<protein>
    <recommendedName>
        <fullName evidence="1">Small ribosomal subunit protein uS8</fullName>
    </recommendedName>
    <alternativeName>
        <fullName evidence="2">30S ribosomal protein S8</fullName>
    </alternativeName>
</protein>
<name>RS8_PETMO</name>
<accession>A9BG04</accession>
<evidence type="ECO:0000255" key="1">
    <source>
        <dbReference type="HAMAP-Rule" id="MF_01302"/>
    </source>
</evidence>
<evidence type="ECO:0000305" key="2"/>
<comment type="function">
    <text evidence="1">One of the primary rRNA binding proteins, it binds directly to 16S rRNA central domain where it helps coordinate assembly of the platform of the 30S subunit.</text>
</comment>
<comment type="subunit">
    <text evidence="1">Part of the 30S ribosomal subunit. Contacts proteins S5 and S12.</text>
</comment>
<comment type="similarity">
    <text evidence="1">Belongs to the universal ribosomal protein uS8 family.</text>
</comment>
<feature type="chain" id="PRO_1000085932" description="Small ribosomal subunit protein uS8">
    <location>
        <begin position="1"/>
        <end position="134"/>
    </location>
</feature>
<reference key="1">
    <citation type="submission" date="2007-11" db="EMBL/GenBank/DDBJ databases">
        <title>Complete sequence of Petroga mobilis SJ95.</title>
        <authorList>
            <consortium name="US DOE Joint Genome Institute"/>
            <person name="Copeland A."/>
            <person name="Lucas S."/>
            <person name="Lapidus A."/>
            <person name="Barry K."/>
            <person name="Glavina del Rio T."/>
            <person name="Dalin E."/>
            <person name="Tice H."/>
            <person name="Pitluck S."/>
            <person name="Meincke L."/>
            <person name="Brettin T."/>
            <person name="Bruce D."/>
            <person name="Detter J.C."/>
            <person name="Han C."/>
            <person name="Kuske C.R."/>
            <person name="Schmutz J."/>
            <person name="Larimer F."/>
            <person name="Land M."/>
            <person name="Hauser L."/>
            <person name="Kyrpides N."/>
            <person name="Mikhailova N."/>
            <person name="Noll K."/>
            <person name="Richardson P."/>
        </authorList>
    </citation>
    <scope>NUCLEOTIDE SEQUENCE [LARGE SCALE GENOMIC DNA]</scope>
    <source>
        <strain>DSM 10674 / SJ95</strain>
    </source>
</reference>
<organism>
    <name type="scientific">Petrotoga mobilis (strain DSM 10674 / SJ95)</name>
    <dbReference type="NCBI Taxonomy" id="403833"/>
    <lineage>
        <taxon>Bacteria</taxon>
        <taxon>Thermotogati</taxon>
        <taxon>Thermotogota</taxon>
        <taxon>Thermotogae</taxon>
        <taxon>Petrotogales</taxon>
        <taxon>Petrotogaceae</taxon>
        <taxon>Petrotoga</taxon>
    </lineage>
</organism>
<proteinExistence type="inferred from homology"/>
<keyword id="KW-0687">Ribonucleoprotein</keyword>
<keyword id="KW-0689">Ribosomal protein</keyword>
<keyword id="KW-0694">RNA-binding</keyword>
<keyword id="KW-0699">rRNA-binding</keyword>